<accession>Q58812</accession>
<name>LONB_METJA</name>
<sequence>MFSIKFKTTEELPEPSPRLIDQVIGQEEAVKIVLSAVKNKRNVILLGDPGVGKSMIVKAVGEILSDFGEFTPYYVIAKPNLKNMERPIVEVIDGEYKEDSKDMPKLDFKAPSSTTLLLIMIGAILLSEYLLKYLPQNYLLAAVTITALIVLIFGFVIILTSIMGASRASMPNNLNPMDLKPVLLYECKKRPLVRASAYNVTRLLGDIKHCPLGGRPPLGTPPHKRIILGAIHEAHRGILYVDEIKTMPLEVQDYILTALQDKQLPISGRNPNSSGATVETNPIPCDFILIMSGNMDDVYNLRAPLLDRIDYKIVLKNKMDNTLENRDKLLQFIVQEIKNNNLNPMTYDGCCEVVRIAQYLAGSKDKLTLRLRLLANIIKMANDVAMGKDVEELLGNFDDKGEYHPETQKDKSNKVYITAEHVRKVFDTGIYSMEKQVALNYIKNFKRYKHIVPNDEPKVGVIYGLAVLGAGGIGDVTKIIVQILESKNPGTHLLNISGDIAKHSITLASALSKKLVAEKKLPLPKKDIDLNNKEIYIQFSQSYSKIDGDSATAAVCLAIISALLDIPLKQDFAITGSLDLSGNVLAIGGVNEKIEAAKRYGFKRVIIPEANMIDVIETEGIEIIPVKTLDEIVPLVFDLDNRGGAERFN</sequence>
<protein>
    <recommendedName>
        <fullName>Archaeal Lon protease</fullName>
        <ecNumber>3.4.21.-</ecNumber>
    </recommendedName>
    <alternativeName>
        <fullName>ATP-dependent protease La homolog</fullName>
    </alternativeName>
</protein>
<organism>
    <name type="scientific">Methanocaldococcus jannaschii (strain ATCC 43067 / DSM 2661 / JAL-1 / JCM 10045 / NBRC 100440)</name>
    <name type="common">Methanococcus jannaschii</name>
    <dbReference type="NCBI Taxonomy" id="243232"/>
    <lineage>
        <taxon>Archaea</taxon>
        <taxon>Methanobacteriati</taxon>
        <taxon>Methanobacteriota</taxon>
        <taxon>Methanomada group</taxon>
        <taxon>Methanococci</taxon>
        <taxon>Methanococcales</taxon>
        <taxon>Methanocaldococcaceae</taxon>
        <taxon>Methanocaldococcus</taxon>
    </lineage>
</organism>
<reference key="1">
    <citation type="journal article" date="1996" name="Science">
        <title>Complete genome sequence of the methanogenic archaeon, Methanococcus jannaschii.</title>
        <authorList>
            <person name="Bult C.J."/>
            <person name="White O."/>
            <person name="Olsen G.J."/>
            <person name="Zhou L."/>
            <person name="Fleischmann R.D."/>
            <person name="Sutton G.G."/>
            <person name="Blake J.A."/>
            <person name="FitzGerald L.M."/>
            <person name="Clayton R.A."/>
            <person name="Gocayne J.D."/>
            <person name="Kerlavage A.R."/>
            <person name="Dougherty B.A."/>
            <person name="Tomb J.-F."/>
            <person name="Adams M.D."/>
            <person name="Reich C.I."/>
            <person name="Overbeek R."/>
            <person name="Kirkness E.F."/>
            <person name="Weinstock K.G."/>
            <person name="Merrick J.M."/>
            <person name="Glodek A."/>
            <person name="Scott J.L."/>
            <person name="Geoghagen N.S.M."/>
            <person name="Weidman J.F."/>
            <person name="Fuhrmann J.L."/>
            <person name="Nguyen D."/>
            <person name="Utterback T.R."/>
            <person name="Kelley J.M."/>
            <person name="Peterson J.D."/>
            <person name="Sadow P.W."/>
            <person name="Hanna M.C."/>
            <person name="Cotton M.D."/>
            <person name="Roberts K.M."/>
            <person name="Hurst M.A."/>
            <person name="Kaine B.P."/>
            <person name="Borodovsky M."/>
            <person name="Klenk H.-P."/>
            <person name="Fraser C.M."/>
            <person name="Smith H.O."/>
            <person name="Woese C.R."/>
            <person name="Venter J.C."/>
        </authorList>
    </citation>
    <scope>NUCLEOTIDE SEQUENCE [LARGE SCALE GENOMIC DNA]</scope>
    <source>
        <strain>ATCC 43067 / DSM 2661 / JAL-1 / JCM 10045 / NBRC 100440</strain>
    </source>
</reference>
<reference key="2">
    <citation type="journal article" date="2004" name="J. Biol. Chem.">
        <title>The active site of a lon protease from Methanococcus jannaschii distinctly differs from the canonical catalytic Dyad of Lon proteases.</title>
        <authorList>
            <person name="Im Y.J."/>
            <person name="Na Y."/>
            <person name="Kang G.B."/>
            <person name="Rho S.H."/>
            <person name="Kim M.K."/>
            <person name="Lee J.H."/>
            <person name="Chung C.H."/>
            <person name="Eom S.H."/>
        </authorList>
    </citation>
    <scope>X-RAY CRYSTALLOGRAPHY (1.9 ANGSTROMS) OF 456-640</scope>
    <scope>ACTIVE SITE</scope>
</reference>
<comment type="function">
    <text evidence="1">ATP-dependent serine protease that mediates the selective degradation of mutant and abnormal proteins as well as certain short-lived regulatory proteins. Degrades polypeptides processively (By similarity).</text>
</comment>
<comment type="subunit">
    <text evidence="1">Homohexamer. Organized in a ring with a central cavity (By similarity).</text>
</comment>
<comment type="subcellular location">
    <subcellularLocation>
        <location evidence="1">Cell membrane</location>
        <topology evidence="5">Multi-pass membrane protein</topology>
    </subcellularLocation>
</comment>
<comment type="similarity">
    <text evidence="5">Belongs to the peptidase S16 family. Archaeal LonB subfamily.</text>
</comment>
<evidence type="ECO:0000250" key="1"/>
<evidence type="ECO:0000255" key="2"/>
<evidence type="ECO:0000255" key="3">
    <source>
        <dbReference type="PROSITE-ProRule" id="PRU01122"/>
    </source>
</evidence>
<evidence type="ECO:0000269" key="4">
    <source>
    </source>
</evidence>
<evidence type="ECO:0000305" key="5"/>
<evidence type="ECO:0007829" key="6">
    <source>
        <dbReference type="PDB" id="1XHK"/>
    </source>
</evidence>
<proteinExistence type="evidence at protein level"/>
<dbReference type="EC" id="3.4.21.-"/>
<dbReference type="EMBL" id="L77117">
    <property type="protein sequence ID" value="AAB99427.1"/>
    <property type="molecule type" value="Genomic_DNA"/>
</dbReference>
<dbReference type="PIR" id="H64476">
    <property type="entry name" value="H64476"/>
</dbReference>
<dbReference type="RefSeq" id="WP_010870934.1">
    <property type="nucleotide sequence ID" value="NC_000909.1"/>
</dbReference>
<dbReference type="PDB" id="1XHK">
    <property type="method" value="X-ray"/>
    <property type="resolution" value="1.90 A"/>
    <property type="chains" value="A/B=456-640"/>
</dbReference>
<dbReference type="PDBsum" id="1XHK"/>
<dbReference type="SMR" id="Q58812"/>
<dbReference type="STRING" id="243232.MJ_1417"/>
<dbReference type="MEROPS" id="S16.008"/>
<dbReference type="PaxDb" id="243232-MJ_1417"/>
<dbReference type="EnsemblBacteria" id="AAB99427">
    <property type="protein sequence ID" value="AAB99427"/>
    <property type="gene ID" value="MJ_1417"/>
</dbReference>
<dbReference type="GeneID" id="1452320"/>
<dbReference type="KEGG" id="mja:MJ_1417"/>
<dbReference type="eggNOG" id="arCOG02160">
    <property type="taxonomic scope" value="Archaea"/>
</dbReference>
<dbReference type="HOGENOM" id="CLU_392630_0_0_2"/>
<dbReference type="InParanoid" id="Q58812"/>
<dbReference type="OrthoDB" id="64652at2157"/>
<dbReference type="PhylomeDB" id="Q58812"/>
<dbReference type="EvolutionaryTrace" id="Q58812"/>
<dbReference type="Proteomes" id="UP000000805">
    <property type="component" value="Chromosome"/>
</dbReference>
<dbReference type="GO" id="GO:0005886">
    <property type="term" value="C:plasma membrane"/>
    <property type="evidence" value="ECO:0007669"/>
    <property type="project" value="UniProtKB-SubCell"/>
</dbReference>
<dbReference type="GO" id="GO:0005524">
    <property type="term" value="F:ATP binding"/>
    <property type="evidence" value="ECO:0007669"/>
    <property type="project" value="UniProtKB-KW"/>
</dbReference>
<dbReference type="GO" id="GO:0016887">
    <property type="term" value="F:ATP hydrolysis activity"/>
    <property type="evidence" value="ECO:0007669"/>
    <property type="project" value="InterPro"/>
</dbReference>
<dbReference type="GO" id="GO:0004176">
    <property type="term" value="F:ATP-dependent peptidase activity"/>
    <property type="evidence" value="ECO:0007669"/>
    <property type="project" value="InterPro"/>
</dbReference>
<dbReference type="GO" id="GO:0004252">
    <property type="term" value="F:serine-type endopeptidase activity"/>
    <property type="evidence" value="ECO:0007669"/>
    <property type="project" value="InterPro"/>
</dbReference>
<dbReference type="GO" id="GO:0030163">
    <property type="term" value="P:protein catabolic process"/>
    <property type="evidence" value="ECO:0007669"/>
    <property type="project" value="InterPro"/>
</dbReference>
<dbReference type="GO" id="GO:0006508">
    <property type="term" value="P:proteolysis"/>
    <property type="evidence" value="ECO:0007669"/>
    <property type="project" value="UniProtKB-KW"/>
</dbReference>
<dbReference type="GO" id="GO:0006355">
    <property type="term" value="P:regulation of DNA-templated transcription"/>
    <property type="evidence" value="ECO:0007669"/>
    <property type="project" value="InterPro"/>
</dbReference>
<dbReference type="Gene3D" id="1.10.8.60">
    <property type="match status" value="1"/>
</dbReference>
<dbReference type="Gene3D" id="3.30.230.10">
    <property type="match status" value="1"/>
</dbReference>
<dbReference type="Gene3D" id="3.40.50.300">
    <property type="entry name" value="P-loop containing nucleotide triphosphate hydrolases"/>
    <property type="match status" value="2"/>
</dbReference>
<dbReference type="InterPro" id="IPR003593">
    <property type="entry name" value="AAA+_ATPase"/>
</dbReference>
<dbReference type="InterPro" id="IPR004663">
    <property type="entry name" value="Lon_arc"/>
</dbReference>
<dbReference type="InterPro" id="IPR008269">
    <property type="entry name" value="Lon_proteolytic"/>
</dbReference>
<dbReference type="InterPro" id="IPR027065">
    <property type="entry name" value="Lon_Prtase"/>
</dbReference>
<dbReference type="InterPro" id="IPR000523">
    <property type="entry name" value="Mg_chelatse_chII-like_cat_dom"/>
</dbReference>
<dbReference type="InterPro" id="IPR027417">
    <property type="entry name" value="P-loop_NTPase"/>
</dbReference>
<dbReference type="InterPro" id="IPR020568">
    <property type="entry name" value="Ribosomal_Su5_D2-typ_SF"/>
</dbReference>
<dbReference type="InterPro" id="IPR014721">
    <property type="entry name" value="Ribsml_uS5_D2-typ_fold_subgr"/>
</dbReference>
<dbReference type="InterPro" id="IPR002078">
    <property type="entry name" value="Sigma_54_int"/>
</dbReference>
<dbReference type="NCBIfam" id="TIGR00764">
    <property type="entry name" value="lon_rel"/>
    <property type="match status" value="1"/>
</dbReference>
<dbReference type="PANTHER" id="PTHR10046">
    <property type="entry name" value="ATP DEPENDENT LON PROTEASE FAMILY MEMBER"/>
    <property type="match status" value="1"/>
</dbReference>
<dbReference type="Pfam" id="PF05362">
    <property type="entry name" value="Lon_C"/>
    <property type="match status" value="1"/>
</dbReference>
<dbReference type="Pfam" id="PF01078">
    <property type="entry name" value="Mg_chelatase"/>
    <property type="match status" value="1"/>
</dbReference>
<dbReference type="Pfam" id="PF00158">
    <property type="entry name" value="Sigma54_activat"/>
    <property type="match status" value="1"/>
</dbReference>
<dbReference type="PRINTS" id="PR00830">
    <property type="entry name" value="ENDOLAPTASE"/>
</dbReference>
<dbReference type="SMART" id="SM00382">
    <property type="entry name" value="AAA"/>
    <property type="match status" value="1"/>
</dbReference>
<dbReference type="SUPFAM" id="SSF52540">
    <property type="entry name" value="P-loop containing nucleoside triphosphate hydrolases"/>
    <property type="match status" value="1"/>
</dbReference>
<dbReference type="SUPFAM" id="SSF54211">
    <property type="entry name" value="Ribosomal protein S5 domain 2-like"/>
    <property type="match status" value="1"/>
</dbReference>
<dbReference type="PROSITE" id="PS51786">
    <property type="entry name" value="LON_PROTEOLYTIC"/>
    <property type="match status" value="1"/>
</dbReference>
<gene>
    <name type="ordered locus">MJ1417</name>
</gene>
<feature type="chain" id="PRO_0000076150" description="Archaeal Lon protease">
    <location>
        <begin position="1"/>
        <end position="649"/>
    </location>
</feature>
<feature type="topological domain" description="Cytoplasmic" evidence="2">
    <location>
        <begin position="1"/>
        <end position="114"/>
    </location>
</feature>
<feature type="transmembrane region" description="Helical" evidence="2">
    <location>
        <begin position="115"/>
        <end position="135"/>
    </location>
</feature>
<feature type="topological domain" description="Extracellular" evidence="2">
    <location>
        <begin position="136"/>
        <end position="138"/>
    </location>
</feature>
<feature type="transmembrane region" description="Helical" evidence="2">
    <location>
        <begin position="139"/>
        <end position="159"/>
    </location>
</feature>
<feature type="topological domain" description="Cytoplasmic" evidence="2">
    <location>
        <begin position="160"/>
        <end position="649"/>
    </location>
</feature>
<feature type="domain" description="Lon proteolytic" evidence="3">
    <location>
        <begin position="456"/>
        <end position="639"/>
    </location>
</feature>
<feature type="active site" evidence="4">
    <location>
        <position position="550"/>
    </location>
</feature>
<feature type="active site" evidence="4">
    <location>
        <position position="593"/>
    </location>
</feature>
<feature type="binding site" evidence="2">
    <location>
        <begin position="47"/>
        <end position="54"/>
    </location>
    <ligand>
        <name>ATP</name>
        <dbReference type="ChEBI" id="CHEBI:30616"/>
    </ligand>
</feature>
<feature type="strand" evidence="6">
    <location>
        <begin position="461"/>
        <end position="466"/>
    </location>
</feature>
<feature type="strand" evidence="6">
    <location>
        <begin position="469"/>
        <end position="472"/>
    </location>
</feature>
<feature type="strand" evidence="6">
    <location>
        <begin position="475"/>
        <end position="485"/>
    </location>
</feature>
<feature type="strand" evidence="6">
    <location>
        <begin position="490"/>
        <end position="496"/>
    </location>
</feature>
<feature type="helix" evidence="6">
    <location>
        <begin position="498"/>
        <end position="517"/>
    </location>
</feature>
<feature type="strand" evidence="6">
    <location>
        <begin position="533"/>
        <end position="541"/>
    </location>
</feature>
<feature type="turn" evidence="6">
    <location>
        <begin position="545"/>
        <end position="547"/>
    </location>
</feature>
<feature type="helix" evidence="6">
    <location>
        <begin position="548"/>
        <end position="551"/>
    </location>
</feature>
<feature type="helix" evidence="6">
    <location>
        <begin position="552"/>
        <end position="564"/>
    </location>
</feature>
<feature type="strand" evidence="6">
    <location>
        <begin position="570"/>
        <end position="574"/>
    </location>
</feature>
<feature type="strand" evidence="6">
    <location>
        <begin position="583"/>
        <end position="585"/>
    </location>
</feature>
<feature type="helix" evidence="6">
    <location>
        <begin position="590"/>
        <end position="599"/>
    </location>
</feature>
<feature type="strand" evidence="6">
    <location>
        <begin position="603"/>
        <end position="608"/>
    </location>
</feature>
<feature type="helix" evidence="6">
    <location>
        <begin position="609"/>
        <end position="614"/>
    </location>
</feature>
<feature type="strand" evidence="6">
    <location>
        <begin position="620"/>
        <end position="628"/>
    </location>
</feature>
<feature type="helix" evidence="6">
    <location>
        <begin position="629"/>
        <end position="636"/>
    </location>
</feature>
<keyword id="KW-0002">3D-structure</keyword>
<keyword id="KW-0067">ATP-binding</keyword>
<keyword id="KW-1003">Cell membrane</keyword>
<keyword id="KW-0378">Hydrolase</keyword>
<keyword id="KW-0472">Membrane</keyword>
<keyword id="KW-0547">Nucleotide-binding</keyword>
<keyword id="KW-0645">Protease</keyword>
<keyword id="KW-1185">Reference proteome</keyword>
<keyword id="KW-0720">Serine protease</keyword>
<keyword id="KW-0812">Transmembrane</keyword>
<keyword id="KW-1133">Transmembrane helix</keyword>